<evidence type="ECO:0000250" key="1"/>
<evidence type="ECO:0000255" key="2">
    <source>
        <dbReference type="PROSITE-ProRule" id="PRU00303"/>
    </source>
</evidence>
<evidence type="ECO:0000305" key="3"/>
<gene>
    <name type="primary">metQ</name>
    <name type="ordered locus">YPO1071</name>
    <name type="ordered locus">y3106</name>
    <name type="ordered locus">YP_2778</name>
</gene>
<comment type="function">
    <text evidence="1">This protein is a component of a D-methionine permease, a binding protein-dependent, ATP-driven transport system.</text>
</comment>
<comment type="subcellular location">
    <subcellularLocation>
        <location evidence="3">Cell membrane</location>
        <topology evidence="3">Lipid-anchor</topology>
    </subcellularLocation>
</comment>
<comment type="miscellaneous">
    <text evidence="1">The MetNIQ system is also to be able to transport the toxic methionine analog alpha-methyl-methionine.</text>
</comment>
<comment type="similarity">
    <text evidence="3">Belongs to the NlpA lipoprotein family.</text>
</comment>
<dbReference type="EMBL" id="AL590842">
    <property type="protein sequence ID" value="CAL19737.1"/>
    <property type="molecule type" value="Genomic_DNA"/>
</dbReference>
<dbReference type="EMBL" id="AE009952">
    <property type="protein sequence ID" value="AAM86656.1"/>
    <property type="molecule type" value="Genomic_DNA"/>
</dbReference>
<dbReference type="EMBL" id="AE017042">
    <property type="protein sequence ID" value="AAS62962.1"/>
    <property type="molecule type" value="Genomic_DNA"/>
</dbReference>
<dbReference type="PIR" id="AG0131">
    <property type="entry name" value="AG0131"/>
</dbReference>
<dbReference type="RefSeq" id="WP_002212159.1">
    <property type="nucleotide sequence ID" value="NZ_WUCM01000044.1"/>
</dbReference>
<dbReference type="RefSeq" id="YP_002346115.1">
    <property type="nucleotide sequence ID" value="NC_003143.1"/>
</dbReference>
<dbReference type="SMR" id="Q8ZH40"/>
<dbReference type="IntAct" id="Q8ZH40">
    <property type="interactions" value="4"/>
</dbReference>
<dbReference type="STRING" id="214092.YPO1071"/>
<dbReference type="PaxDb" id="214092-YPO1071"/>
<dbReference type="DNASU" id="1148053"/>
<dbReference type="EnsemblBacteria" id="AAS62962">
    <property type="protein sequence ID" value="AAS62962"/>
    <property type="gene ID" value="YP_2778"/>
</dbReference>
<dbReference type="KEGG" id="ype:YPO1071"/>
<dbReference type="KEGG" id="ypk:y3106"/>
<dbReference type="KEGG" id="ypm:YP_2778"/>
<dbReference type="PATRIC" id="fig|214092.21.peg.1360"/>
<dbReference type="eggNOG" id="COG1464">
    <property type="taxonomic scope" value="Bacteria"/>
</dbReference>
<dbReference type="HOGENOM" id="CLU_067080_3_0_6"/>
<dbReference type="OMA" id="DHKITRE"/>
<dbReference type="OrthoDB" id="9812878at2"/>
<dbReference type="Proteomes" id="UP000000815">
    <property type="component" value="Chromosome"/>
</dbReference>
<dbReference type="Proteomes" id="UP000001019">
    <property type="component" value="Chromosome"/>
</dbReference>
<dbReference type="Proteomes" id="UP000002490">
    <property type="component" value="Chromosome"/>
</dbReference>
<dbReference type="GO" id="GO:0005886">
    <property type="term" value="C:plasma membrane"/>
    <property type="evidence" value="ECO:0000318"/>
    <property type="project" value="GO_Central"/>
</dbReference>
<dbReference type="GO" id="GO:0048473">
    <property type="term" value="P:D-methionine transmembrane transport"/>
    <property type="evidence" value="ECO:0000318"/>
    <property type="project" value="GO_Central"/>
</dbReference>
<dbReference type="GO" id="GO:1903692">
    <property type="term" value="P:methionine import across plasma membrane"/>
    <property type="evidence" value="ECO:0000318"/>
    <property type="project" value="GO_Central"/>
</dbReference>
<dbReference type="CDD" id="cd13598">
    <property type="entry name" value="PBP2_lipoprotein_IlpA_like"/>
    <property type="match status" value="1"/>
</dbReference>
<dbReference type="FunFam" id="3.40.190.10:FF:000016">
    <property type="entry name" value="Lipoprotein"/>
    <property type="match status" value="1"/>
</dbReference>
<dbReference type="Gene3D" id="3.40.190.10">
    <property type="entry name" value="Periplasmic binding protein-like II"/>
    <property type="match status" value="2"/>
</dbReference>
<dbReference type="InterPro" id="IPR004872">
    <property type="entry name" value="Lipoprotein_NlpA"/>
</dbReference>
<dbReference type="NCBIfam" id="TIGR00363">
    <property type="entry name" value="MetQ/NlpA family lipoprotein"/>
    <property type="match status" value="1"/>
</dbReference>
<dbReference type="NCBIfam" id="NF008285">
    <property type="entry name" value="PRK11063.1"/>
    <property type="match status" value="1"/>
</dbReference>
<dbReference type="PANTHER" id="PTHR30429">
    <property type="entry name" value="D-METHIONINE-BINDING LIPOPROTEIN METQ"/>
    <property type="match status" value="1"/>
</dbReference>
<dbReference type="PANTHER" id="PTHR30429:SF1">
    <property type="entry name" value="D-METHIONINE-BINDING LIPOPROTEIN METQ-RELATED"/>
    <property type="match status" value="1"/>
</dbReference>
<dbReference type="Pfam" id="PF03180">
    <property type="entry name" value="Lipoprotein_9"/>
    <property type="match status" value="1"/>
</dbReference>
<dbReference type="PIRSF" id="PIRSF002854">
    <property type="entry name" value="MetQ"/>
    <property type="match status" value="1"/>
</dbReference>
<dbReference type="SUPFAM" id="SSF53850">
    <property type="entry name" value="Periplasmic binding protein-like II"/>
    <property type="match status" value="1"/>
</dbReference>
<dbReference type="PROSITE" id="PS51257">
    <property type="entry name" value="PROKAR_LIPOPROTEIN"/>
    <property type="match status" value="1"/>
</dbReference>
<keyword id="KW-0029">Amino-acid transport</keyword>
<keyword id="KW-1003">Cell membrane</keyword>
<keyword id="KW-0449">Lipoprotein</keyword>
<keyword id="KW-0472">Membrane</keyword>
<keyword id="KW-0564">Palmitate</keyword>
<keyword id="KW-1185">Reference proteome</keyword>
<keyword id="KW-0732">Signal</keyword>
<keyword id="KW-0813">Transport</keyword>
<protein>
    <recommendedName>
        <fullName>D-methionine-binding lipoprotein MetQ</fullName>
    </recommendedName>
</protein>
<organism>
    <name type="scientific">Yersinia pestis</name>
    <dbReference type="NCBI Taxonomy" id="632"/>
    <lineage>
        <taxon>Bacteria</taxon>
        <taxon>Pseudomonadati</taxon>
        <taxon>Pseudomonadota</taxon>
        <taxon>Gammaproteobacteria</taxon>
        <taxon>Enterobacterales</taxon>
        <taxon>Yersiniaceae</taxon>
        <taxon>Yersinia</taxon>
    </lineage>
</organism>
<proteinExistence type="inferred from homology"/>
<feature type="signal peptide" evidence="2">
    <location>
        <begin position="1"/>
        <end position="22"/>
    </location>
</feature>
<feature type="chain" id="PRO_0000019743" description="D-methionine-binding lipoprotein MetQ">
    <location>
        <begin position="23"/>
        <end position="271"/>
    </location>
</feature>
<feature type="lipid moiety-binding region" description="N-palmitoyl cysteine" evidence="2">
    <location>
        <position position="23"/>
    </location>
</feature>
<feature type="lipid moiety-binding region" description="S-diacylglycerol cysteine" evidence="2">
    <location>
        <position position="23"/>
    </location>
</feature>
<reference key="1">
    <citation type="journal article" date="2001" name="Nature">
        <title>Genome sequence of Yersinia pestis, the causative agent of plague.</title>
        <authorList>
            <person name="Parkhill J."/>
            <person name="Wren B.W."/>
            <person name="Thomson N.R."/>
            <person name="Titball R.W."/>
            <person name="Holden M.T.G."/>
            <person name="Prentice M.B."/>
            <person name="Sebaihia M."/>
            <person name="James K.D."/>
            <person name="Churcher C.M."/>
            <person name="Mungall K.L."/>
            <person name="Baker S."/>
            <person name="Basham D."/>
            <person name="Bentley S.D."/>
            <person name="Brooks K."/>
            <person name="Cerdeno-Tarraga A.-M."/>
            <person name="Chillingworth T."/>
            <person name="Cronin A."/>
            <person name="Davies R.M."/>
            <person name="Davis P."/>
            <person name="Dougan G."/>
            <person name="Feltwell T."/>
            <person name="Hamlin N."/>
            <person name="Holroyd S."/>
            <person name="Jagels K."/>
            <person name="Karlyshev A.V."/>
            <person name="Leather S."/>
            <person name="Moule S."/>
            <person name="Oyston P.C.F."/>
            <person name="Quail M.A."/>
            <person name="Rutherford K.M."/>
            <person name="Simmonds M."/>
            <person name="Skelton J."/>
            <person name="Stevens K."/>
            <person name="Whitehead S."/>
            <person name="Barrell B.G."/>
        </authorList>
    </citation>
    <scope>NUCLEOTIDE SEQUENCE [LARGE SCALE GENOMIC DNA]</scope>
    <source>
        <strain>CO-92 / Biovar Orientalis</strain>
    </source>
</reference>
<reference key="2">
    <citation type="journal article" date="2002" name="J. Bacteriol.">
        <title>Genome sequence of Yersinia pestis KIM.</title>
        <authorList>
            <person name="Deng W."/>
            <person name="Burland V."/>
            <person name="Plunkett G. III"/>
            <person name="Boutin A."/>
            <person name="Mayhew G.F."/>
            <person name="Liss P."/>
            <person name="Perna N.T."/>
            <person name="Rose D.J."/>
            <person name="Mau B."/>
            <person name="Zhou S."/>
            <person name="Schwartz D.C."/>
            <person name="Fetherston J.D."/>
            <person name="Lindler L.E."/>
            <person name="Brubaker R.R."/>
            <person name="Plano G.V."/>
            <person name="Straley S.C."/>
            <person name="McDonough K.A."/>
            <person name="Nilles M.L."/>
            <person name="Matson J.S."/>
            <person name="Blattner F.R."/>
            <person name="Perry R.D."/>
        </authorList>
    </citation>
    <scope>NUCLEOTIDE SEQUENCE [LARGE SCALE GENOMIC DNA]</scope>
    <source>
        <strain>KIM10+ / Biovar Mediaevalis</strain>
    </source>
</reference>
<reference key="3">
    <citation type="journal article" date="2004" name="DNA Res.">
        <title>Complete genome sequence of Yersinia pestis strain 91001, an isolate avirulent to humans.</title>
        <authorList>
            <person name="Song Y."/>
            <person name="Tong Z."/>
            <person name="Wang J."/>
            <person name="Wang L."/>
            <person name="Guo Z."/>
            <person name="Han Y."/>
            <person name="Zhang J."/>
            <person name="Pei D."/>
            <person name="Zhou D."/>
            <person name="Qin H."/>
            <person name="Pang X."/>
            <person name="Han Y."/>
            <person name="Zhai J."/>
            <person name="Li M."/>
            <person name="Cui B."/>
            <person name="Qi Z."/>
            <person name="Jin L."/>
            <person name="Dai R."/>
            <person name="Chen F."/>
            <person name="Li S."/>
            <person name="Ye C."/>
            <person name="Du Z."/>
            <person name="Lin W."/>
            <person name="Wang J."/>
            <person name="Yu J."/>
            <person name="Yang H."/>
            <person name="Wang J."/>
            <person name="Huang P."/>
            <person name="Yang R."/>
        </authorList>
    </citation>
    <scope>NUCLEOTIDE SEQUENCE [LARGE SCALE GENOMIC DNA]</scope>
    <source>
        <strain>91001 / Biovar Mediaevalis</strain>
    </source>
</reference>
<sequence length="271" mass="29377">MSLKFKSIAAISALIGTLTLVGCGPTEKAPNHIKVGVIVGAEQQVAEVAQKVAKEKYGLDVELVTFNDYVLPNEALSKGDIDLNAFQHKPYLDQQIKDRGYKLVSVGNSFVYPIAGYSKKIKSLDELQPGSQVALPNDPTNLGRSLLLLQSVGLIKLKDGVGLLPTVLDVVENPKNLKLVELEAPQLPRSLDDQQIALAIINTTYASQIGLTPAKDGLFVEDKESPYVNLIVAREDNKDAENVKKFVQAYQSDEVYDAANKAFNGGAVKGW</sequence>
<name>METQ_YERPE</name>
<accession>Q8ZH40</accession>
<accession>Q0WHX3</accession>